<evidence type="ECO:0000250" key="1">
    <source>
        <dbReference type="UniProtKB" id="P11562"/>
    </source>
</evidence>
<evidence type="ECO:0000305" key="2"/>
<organism>
    <name type="scientific">Methanococcus vannielii</name>
    <dbReference type="NCBI Taxonomy" id="2187"/>
    <lineage>
        <taxon>Archaea</taxon>
        <taxon>Methanobacteriati</taxon>
        <taxon>Methanobacteriota</taxon>
        <taxon>Methanomada group</taxon>
        <taxon>Methanococci</taxon>
        <taxon>Methanococcales</taxon>
        <taxon>Methanococcaceae</taxon>
        <taxon>Methanococcus</taxon>
    </lineage>
</organism>
<name>MCRG_METVA</name>
<protein>
    <recommendedName>
        <fullName>Methyl-coenzyme M reductase subunit gamma</fullName>
        <ecNumber evidence="1">2.8.4.1</ecNumber>
    </recommendedName>
    <alternativeName>
        <fullName>Coenzyme-B sulfoethylthiotransferase gamma</fullName>
    </alternativeName>
</protein>
<keyword id="KW-0963">Cytoplasm</keyword>
<keyword id="KW-0484">Methanogenesis</keyword>
<keyword id="KW-0808">Transferase</keyword>
<accession>P07963</accession>
<reference key="1">
    <citation type="journal article" date="1987" name="Proc. Natl. Acad. Sci. U.S.A.">
        <title>Structure and expression of the genes, mcrBDCGA, which encode the subunits of component C of methyl coenzyme M reductase in Methanococcus vannielii.</title>
        <authorList>
            <person name="Cram D.S."/>
            <person name="Sherf B.A."/>
            <person name="Libby R.T."/>
            <person name="Mattaliano R.J."/>
            <person name="Ramachandran K.L."/>
            <person name="Reeve J.N."/>
        </authorList>
    </citation>
    <scope>NUCLEOTIDE SEQUENCE [GENOMIC DNA]</scope>
</reference>
<proteinExistence type="inferred from homology"/>
<dbReference type="EC" id="2.8.4.1" evidence="1"/>
<dbReference type="EMBL" id="M16893">
    <property type="protein sequence ID" value="AAA72597.1"/>
    <property type="molecule type" value="Genomic_DNA"/>
</dbReference>
<dbReference type="PIR" id="D27793">
    <property type="entry name" value="D27793"/>
</dbReference>
<dbReference type="SMR" id="P07963"/>
<dbReference type="GeneID" id="5326170"/>
<dbReference type="OMA" id="IMGHRQP"/>
<dbReference type="UniPathway" id="UPA00646">
    <property type="reaction ID" value="UER00699"/>
</dbReference>
<dbReference type="GO" id="GO:0005737">
    <property type="term" value="C:cytoplasm"/>
    <property type="evidence" value="ECO:0007669"/>
    <property type="project" value="UniProtKB-SubCell"/>
</dbReference>
<dbReference type="GO" id="GO:0050524">
    <property type="term" value="F:coenzyme-B sulfoethylthiotransferase activity"/>
    <property type="evidence" value="ECO:0007669"/>
    <property type="project" value="UniProtKB-EC"/>
</dbReference>
<dbReference type="GO" id="GO:0015948">
    <property type="term" value="P:methanogenesis"/>
    <property type="evidence" value="ECO:0007669"/>
    <property type="project" value="UniProtKB-KW"/>
</dbReference>
<dbReference type="CDD" id="cd00539">
    <property type="entry name" value="MCR_gamma"/>
    <property type="match status" value="1"/>
</dbReference>
<dbReference type="Gene3D" id="3.90.320.20">
    <property type="entry name" value="Methyl-coenzyme M reductase, gamma subunit"/>
    <property type="match status" value="1"/>
</dbReference>
<dbReference type="InterPro" id="IPR009024">
    <property type="entry name" value="Me_CoM_Rdtase_Fd-like_fold"/>
</dbReference>
<dbReference type="InterPro" id="IPR003178">
    <property type="entry name" value="Me_CoM_Rdtase_gsu"/>
</dbReference>
<dbReference type="InterPro" id="IPR036994">
    <property type="entry name" value="Me_CoM_Rdtase_gsu_sf"/>
</dbReference>
<dbReference type="NCBIfam" id="TIGR03259">
    <property type="entry name" value="met_CoM_red_gam"/>
    <property type="match status" value="1"/>
</dbReference>
<dbReference type="Pfam" id="PF02240">
    <property type="entry name" value="MCR_gamma"/>
    <property type="match status" value="1"/>
</dbReference>
<dbReference type="PIRSF" id="PIRSF000264">
    <property type="entry name" value="Meth_CoM_rd_gama"/>
    <property type="match status" value="1"/>
</dbReference>
<dbReference type="SUPFAM" id="SSF55088">
    <property type="entry name" value="Methyl-coenzyme M reductase subunits"/>
    <property type="match status" value="1"/>
</dbReference>
<sequence>MAYKPQFYPGATKVAENRRNHLNPNYELEKLREIPDEDVVKIMGHRQPGEDYKTVHPPLEEMDMPADYVRDLVEPLNGAKEGHRVRYIQFADSMYFAPAQPYDRSRLYMIRLRGVDAGTLSGRQVVECRESDLEEFSKNLLMDTELFDPATSGVRGATVHGHSLRLDENGMMFDALQRCVFDEKTGHVMYVKDQVGKPLDQPVDVGEPMPEAKLREITTIYRKDGIAMRTDPEVIEVVKRIHRARTLGGYIPTNEIFKGL</sequence>
<feature type="chain" id="PRO_0000147483" description="Methyl-coenzyme M reductase subunit gamma">
    <location>
        <begin position="1"/>
        <end position="260"/>
    </location>
</feature>
<feature type="binding site" evidence="1">
    <location>
        <position position="123"/>
    </location>
    <ligand>
        <name>coenzyme M</name>
        <dbReference type="ChEBI" id="CHEBI:58319"/>
    </ligand>
</feature>
<comment type="function">
    <text evidence="1">Component of the methyl-coenzyme M reductase (MCR) I that catalyzes the reductive cleavage of methyl-coenzyme M (CoM-S-CH3 or 2-(methylthio)ethanesulfonate) using coenzyme B (CoB or 7-mercaptoheptanoylthreonine phosphate) as reductant which results in the production of methane and the mixed heterodisulfide of CoB and CoM (CoM-S-S-CoB). This is the final step in methanogenesis.</text>
</comment>
<comment type="catalytic activity">
    <reaction evidence="1">
        <text>coenzyme B + methyl-coenzyme M = methane + coenzyme M-coenzyme B heterodisulfide</text>
        <dbReference type="Rhea" id="RHEA:12532"/>
        <dbReference type="ChEBI" id="CHEBI:16183"/>
        <dbReference type="ChEBI" id="CHEBI:58286"/>
        <dbReference type="ChEBI" id="CHEBI:58411"/>
        <dbReference type="ChEBI" id="CHEBI:58596"/>
        <dbReference type="EC" id="2.8.4.1"/>
    </reaction>
    <physiologicalReaction direction="left-to-right" evidence="1">
        <dbReference type="Rhea" id="RHEA:12533"/>
    </physiologicalReaction>
</comment>
<comment type="cofactor">
    <cofactor evidence="1">
        <name>coenzyme F430</name>
        <dbReference type="ChEBI" id="CHEBI:60540"/>
    </cofactor>
    <text evidence="1">Binds 2 coenzyme F430 non-covalently per MCR complex. Coenzyme F430 is a yellow nickel porphinoid. Methyl-coenzyme-M reductase is activated when the enzyme-bound coenzyme F430 is reduced to the Ni(I) oxidation state.</text>
</comment>
<comment type="pathway">
    <text evidence="1">One-carbon metabolism; methyl-coenzyme M reduction; methane from methyl-coenzyme M: step 1/1.</text>
</comment>
<comment type="subunit">
    <text evidence="1">MCR is a hexamer of two alpha, two beta, and two gamma chains, forming a dimer of heterotrimers.</text>
</comment>
<comment type="subcellular location">
    <subcellularLocation>
        <location evidence="1">Cytoplasm</location>
    </subcellularLocation>
</comment>
<comment type="similarity">
    <text evidence="2">Belongs to the methyl-coenzyme M reductase gamma subunit family.</text>
</comment>
<gene>
    <name type="primary">mcrG</name>
</gene>